<gene>
    <name type="primary">FES1</name>
</gene>
<sequence>MLRVAGRRLSSSAARSSSTFFTRSSFTVTDDSSPARSPSPSLTSSFLDQIRGFSSNSVSPAHQLGLVSDLPATVAAIKNPSSKIVYDDSNHERYPPGDPSKRAFAYFVLTGGRFVYASSVRLLILKFVLSMSASKDVLALASLEVDLSSIEPGSTVTVKWRGKPVFIRRRTDDDIKLANSVDLGTLRDPQQDAERVKNPEWLVVVGVCTHLGCIPLPNAGDFGGWFCPCHGSHYDISGRIRKGPAPYNLEVPTYSFLEENKLLIG</sequence>
<protein>
    <recommendedName>
        <fullName>Cytochrome b-c1 complex subunit Rieske, mitochondrial</fullName>
        <ecNumber>7.1.1.8</ecNumber>
    </recommendedName>
    <alternativeName>
        <fullName>Complex III subunit 5</fullName>
    </alternativeName>
    <alternativeName>
        <fullName>Rieske iron-sulfur protein</fullName>
        <shortName>RISP</shortName>
    </alternativeName>
    <alternativeName>
        <fullName>Ubiquinol-cytochrome c reductase iron-sulfur subunit</fullName>
    </alternativeName>
</protein>
<dbReference type="EC" id="7.1.1.8"/>
<dbReference type="EMBL" id="X79332">
    <property type="protein sequence ID" value="CAA55894.1"/>
    <property type="molecule type" value="mRNA"/>
</dbReference>
<dbReference type="PIR" id="S46534">
    <property type="entry name" value="S46534"/>
</dbReference>
<dbReference type="SMR" id="P37841"/>
<dbReference type="FunCoup" id="P37841">
    <property type="interactions" value="2968"/>
</dbReference>
<dbReference type="STRING" id="4113.P37841"/>
<dbReference type="PaxDb" id="4113-PGSC0003DMT400041105"/>
<dbReference type="eggNOG" id="KOG1671">
    <property type="taxonomic scope" value="Eukaryota"/>
</dbReference>
<dbReference type="InParanoid" id="P37841"/>
<dbReference type="Proteomes" id="UP000011115">
    <property type="component" value="Unassembled WGS sequence"/>
</dbReference>
<dbReference type="ExpressionAtlas" id="P37841">
    <property type="expression patterns" value="baseline"/>
</dbReference>
<dbReference type="GO" id="GO:0005743">
    <property type="term" value="C:mitochondrial inner membrane"/>
    <property type="evidence" value="ECO:0007669"/>
    <property type="project" value="UniProtKB-SubCell"/>
</dbReference>
<dbReference type="GO" id="GO:0045275">
    <property type="term" value="C:respiratory chain complex III"/>
    <property type="evidence" value="ECO:0000318"/>
    <property type="project" value="GO_Central"/>
</dbReference>
<dbReference type="GO" id="GO:0051537">
    <property type="term" value="F:2 iron, 2 sulfur cluster binding"/>
    <property type="evidence" value="ECO:0007669"/>
    <property type="project" value="UniProtKB-KW"/>
</dbReference>
<dbReference type="GO" id="GO:0046872">
    <property type="term" value="F:metal ion binding"/>
    <property type="evidence" value="ECO:0007669"/>
    <property type="project" value="UniProtKB-KW"/>
</dbReference>
<dbReference type="GO" id="GO:0016491">
    <property type="term" value="F:oxidoreductase activity"/>
    <property type="evidence" value="ECO:0000318"/>
    <property type="project" value="GO_Central"/>
</dbReference>
<dbReference type="GO" id="GO:0008121">
    <property type="term" value="F:ubiquinol-cytochrome-c reductase activity"/>
    <property type="evidence" value="ECO:0007669"/>
    <property type="project" value="UniProtKB-EC"/>
</dbReference>
<dbReference type="GO" id="GO:0006122">
    <property type="term" value="P:mitochondrial electron transport, ubiquinol to cytochrome c"/>
    <property type="evidence" value="ECO:0000318"/>
    <property type="project" value="GO_Central"/>
</dbReference>
<dbReference type="CDD" id="cd03470">
    <property type="entry name" value="Rieske_cytochrome_bc1"/>
    <property type="match status" value="1"/>
</dbReference>
<dbReference type="FunFam" id="2.102.10.10:FF:000001">
    <property type="entry name" value="Cytochrome b-c1 complex subunit Rieske, mitochondrial"/>
    <property type="match status" value="1"/>
</dbReference>
<dbReference type="Gene3D" id="2.102.10.10">
    <property type="entry name" value="Rieske [2Fe-2S] iron-sulphur domain"/>
    <property type="match status" value="1"/>
</dbReference>
<dbReference type="InterPro" id="IPR017941">
    <property type="entry name" value="Rieske_2Fe-2S"/>
</dbReference>
<dbReference type="InterPro" id="IPR036922">
    <property type="entry name" value="Rieske_2Fe-2S_sf"/>
</dbReference>
<dbReference type="InterPro" id="IPR014349">
    <property type="entry name" value="Rieske_Fe-S_prot"/>
</dbReference>
<dbReference type="InterPro" id="IPR005805">
    <property type="entry name" value="Rieske_Fe-S_prot_C"/>
</dbReference>
<dbReference type="InterPro" id="IPR004192">
    <property type="entry name" value="Rieske_TM"/>
</dbReference>
<dbReference type="InterPro" id="IPR006317">
    <property type="entry name" value="Ubiquinol_cyt_c_Rdtase_Fe-S-su"/>
</dbReference>
<dbReference type="NCBIfam" id="TIGR01416">
    <property type="entry name" value="Rieske_proteo"/>
    <property type="match status" value="1"/>
</dbReference>
<dbReference type="PANTHER" id="PTHR10134">
    <property type="entry name" value="CYTOCHROME B-C1 COMPLEX SUBUNIT RIESKE, MITOCHONDRIAL"/>
    <property type="match status" value="1"/>
</dbReference>
<dbReference type="Pfam" id="PF00355">
    <property type="entry name" value="Rieske"/>
    <property type="match status" value="1"/>
</dbReference>
<dbReference type="Pfam" id="PF02921">
    <property type="entry name" value="UCR_TM"/>
    <property type="match status" value="1"/>
</dbReference>
<dbReference type="PRINTS" id="PR00162">
    <property type="entry name" value="RIESKE"/>
</dbReference>
<dbReference type="SUPFAM" id="SSF50022">
    <property type="entry name" value="ISP domain"/>
    <property type="match status" value="1"/>
</dbReference>
<dbReference type="SUPFAM" id="SSF81502">
    <property type="entry name" value="ISP transmembrane anchor"/>
    <property type="match status" value="1"/>
</dbReference>
<dbReference type="PROSITE" id="PS51296">
    <property type="entry name" value="RIESKE"/>
    <property type="match status" value="1"/>
</dbReference>
<comment type="function">
    <text evidence="1">Component of the ubiquinol-cytochrome c oxidoreductase, a multisubunit transmembrane complex that is part of the mitochondrial electron transport chain which drives oxidative phosphorylation. The respiratory chain contains 3 multisubunit complexes succinate dehydrogenase (complex II, CII), ubiquinol-cytochrome c oxidoreductase (cytochrome b-c1 complex, complex III, CIII) and cytochrome c oxidase (complex IV, CIV), that cooperate to transfer electrons derived from NADH and succinate to molecular oxygen, creating an electrochemical gradient over the inner membrane that drives transmembrane transport and the ATP synthase. The cytochrome b-c1 complex catalyzes electron transfer from ubiquinol to cytochrome c, linking this redox reaction to translocation of protons across the mitochondrial inner membrane, with protons being carried across the membrane as hydrogens on the quinol. In the process called Q cycle, 2 protons are consumed from the matrix, 4 protons are released into the intermembrane space and 2 electrons are passed to cytochrome c. The Rieske protein is a catalytic core subunit containing a [2Fe-2S] iron-sulfur cluster. It cycles between 2 conformational states during catalysis to transfer electrons from the quinol bound in the Q(0) site in cytochrome b to cytochrome c1.</text>
</comment>
<comment type="catalytic activity">
    <reaction evidence="1">
        <text>a quinol + 2 Fe(III)-[cytochrome c](out) = a quinone + 2 Fe(II)-[cytochrome c](out) + 2 H(+)(out)</text>
        <dbReference type="Rhea" id="RHEA:11484"/>
        <dbReference type="Rhea" id="RHEA-COMP:10350"/>
        <dbReference type="Rhea" id="RHEA-COMP:14399"/>
        <dbReference type="ChEBI" id="CHEBI:15378"/>
        <dbReference type="ChEBI" id="CHEBI:24646"/>
        <dbReference type="ChEBI" id="CHEBI:29033"/>
        <dbReference type="ChEBI" id="CHEBI:29034"/>
        <dbReference type="ChEBI" id="CHEBI:132124"/>
        <dbReference type="EC" id="7.1.1.8"/>
    </reaction>
</comment>
<comment type="cofactor">
    <cofactor evidence="3">
        <name>[2Fe-2S] cluster</name>
        <dbReference type="ChEBI" id="CHEBI:190135"/>
    </cofactor>
    <text evidence="3">Binds 1 [2Fe-2S] cluster per subunit.</text>
</comment>
<comment type="subunit">
    <text evidence="1">Component of the ubiquinol-cytochrome c oxidoreductase (cytochrome b-c1 complex, complex III, CIII), a multisubunit enzyme composed of 3 respiratory subunits cytochrome b, cytochrome c1 and Rieske protein, 2 core protein subunits, and several low-molecular weight protein subunits. The complex exists as an obligatory dimer and forms supercomplexes (SCs) in the inner mitochondrial membrane with cytochrome c oxidase (complex IV, CIV).</text>
</comment>
<comment type="subcellular location">
    <subcellularLocation>
        <location evidence="1">Mitochondrion inner membrane</location>
        <topology evidence="1">Single-pass membrane protein</topology>
    </subcellularLocation>
</comment>
<comment type="miscellaneous">
    <text>The Rieske protein is a high potential 2Fe-2S protein.</text>
</comment>
<comment type="similarity">
    <text evidence="4">Belongs to the Rieske iron-sulfur protein family.</text>
</comment>
<name>UCRI_SOLTU</name>
<proteinExistence type="evidence at protein level"/>
<accession>P37841</accession>
<organism>
    <name type="scientific">Solanum tuberosum</name>
    <name type="common">Potato</name>
    <dbReference type="NCBI Taxonomy" id="4113"/>
    <lineage>
        <taxon>Eukaryota</taxon>
        <taxon>Viridiplantae</taxon>
        <taxon>Streptophyta</taxon>
        <taxon>Embryophyta</taxon>
        <taxon>Tracheophyta</taxon>
        <taxon>Spermatophyta</taxon>
        <taxon>Magnoliopsida</taxon>
        <taxon>eudicotyledons</taxon>
        <taxon>Gunneridae</taxon>
        <taxon>Pentapetalae</taxon>
        <taxon>asterids</taxon>
        <taxon>lamiids</taxon>
        <taxon>Solanales</taxon>
        <taxon>Solanaceae</taxon>
        <taxon>Solanoideae</taxon>
        <taxon>Solaneae</taxon>
        <taxon>Solanum</taxon>
    </lineage>
</organism>
<evidence type="ECO:0000250" key="1">
    <source>
        <dbReference type="UniProtKB" id="P08067"/>
    </source>
</evidence>
<evidence type="ECO:0000255" key="2"/>
<evidence type="ECO:0000255" key="3">
    <source>
        <dbReference type="PROSITE-ProRule" id="PRU00628"/>
    </source>
</evidence>
<evidence type="ECO:0000305" key="4"/>
<keyword id="KW-0001">2Fe-2S</keyword>
<keyword id="KW-0903">Direct protein sequencing</keyword>
<keyword id="KW-1015">Disulfide bond</keyword>
<keyword id="KW-0249">Electron transport</keyword>
<keyword id="KW-0408">Iron</keyword>
<keyword id="KW-0411">Iron-sulfur</keyword>
<keyword id="KW-0472">Membrane</keyword>
<keyword id="KW-0479">Metal-binding</keyword>
<keyword id="KW-0496">Mitochondrion</keyword>
<keyword id="KW-0999">Mitochondrion inner membrane</keyword>
<keyword id="KW-1185">Reference proteome</keyword>
<keyword id="KW-0679">Respiratory chain</keyword>
<keyword id="KW-0809">Transit peptide</keyword>
<keyword id="KW-1278">Translocase</keyword>
<keyword id="KW-0812">Transmembrane</keyword>
<keyword id="KW-1133">Transmembrane helix</keyword>
<keyword id="KW-0813">Transport</keyword>
<feature type="transit peptide" description="Mitochondrion">
    <location>
        <begin position="1"/>
        <end position="53"/>
    </location>
</feature>
<feature type="chain" id="PRO_0000030675" description="Cytochrome b-c1 complex subunit Rieske, mitochondrial">
    <location>
        <begin position="54"/>
        <end position="265"/>
    </location>
</feature>
<feature type="topological domain" description="Mitochondrial matrix" evidence="4">
    <location>
        <begin position="54"/>
        <end position="102"/>
    </location>
</feature>
<feature type="transmembrane region" description="Helical" evidence="2">
    <location>
        <begin position="103"/>
        <end position="125"/>
    </location>
</feature>
<feature type="topological domain" description="Mitochondrial intermembrane" evidence="4">
    <location>
        <begin position="126"/>
        <end position="265"/>
    </location>
</feature>
<feature type="domain" description="Rieske" evidence="3">
    <location>
        <begin position="175"/>
        <end position="263"/>
    </location>
</feature>
<feature type="binding site" evidence="3">
    <location>
        <position position="208"/>
    </location>
    <ligand>
        <name>[2Fe-2S] cluster</name>
        <dbReference type="ChEBI" id="CHEBI:190135"/>
    </ligand>
</feature>
<feature type="binding site" evidence="3">
    <location>
        <position position="210"/>
    </location>
    <ligand>
        <name>[2Fe-2S] cluster</name>
        <dbReference type="ChEBI" id="CHEBI:190135"/>
    </ligand>
</feature>
<feature type="binding site" evidence="3">
    <location>
        <position position="227"/>
    </location>
    <ligand>
        <name>[2Fe-2S] cluster</name>
        <dbReference type="ChEBI" id="CHEBI:190135"/>
    </ligand>
</feature>
<feature type="binding site" evidence="3">
    <location>
        <position position="230"/>
    </location>
    <ligand>
        <name>[2Fe-2S] cluster</name>
        <dbReference type="ChEBI" id="CHEBI:190135"/>
    </ligand>
</feature>
<feature type="disulfide bond" evidence="3">
    <location>
        <begin position="213"/>
        <end position="229"/>
    </location>
</feature>
<reference key="1">
    <citation type="journal article" date="1994" name="Plant Mol. Biol.">
        <title>Molecular features, processing and import of the Rieske iron-sulfur protein from potato mitochondria.</title>
        <authorList>
            <person name="Emmermann M."/>
            <person name="Clericus M."/>
            <person name="Braun H.P."/>
            <person name="Mozo T."/>
            <person name="Heins L."/>
            <person name="Kruft V."/>
            <person name="Schmitz U.K."/>
        </authorList>
    </citation>
    <scope>NUCLEOTIDE SEQUENCE [MRNA]</scope>
    <scope>PARTIAL PROTEIN SEQUENCE</scope>
    <source>
        <strain>cv. Desiree</strain>
        <tissue>Leaf</tissue>
    </source>
</reference>